<sequence length="741" mass="80281">MAASSSLSTLSHHQTLLSHPKTHLPTTPASSLLVPTTSSKVNGVLLKSTSSSRRLRVGSASAVVRAAAVEALESTDIDQLVEKSVNTIRFLAIDAVEKANSGHPGLPMGCAPMGHILYDEIMRYNPKNPYWFNRDRFVLSAGHGCMLQYALLHLAGYDSVLEEDLKTFRQWGSRIPGHPENFETPGVEVTTGPLGQGIANAVGLALAEKHLAARFNKPDAEIVDHYTYVILGDGCQMEGIAQEACSLAGHWGLGKLIAFYDDNHISIDGDTAIAFTESVDLRFEALGWHVIWVKNGNTGYDEIRAAIKEAKTVTDKPTLIKVTTTIGFGSPNKSNSYSVHGSALGSKEVEATRQNLGWPYEPFHVPEEVKKHWSRHTPEGASLEAEWNTKFAEYEKKYPEDATEFKSITTGEFPAGWEKALPTYTPETPGDATRNLSQQCLNALAKVIPGLLGGSADLASSNMTLLKMFGDFRRTHRKKETFRFGVREHGMGAICNGICLHSPGFVPYCATFFVFTDYMRGAMRISALSEAGVIYVMTHDSIGLGEDGPTHQPIEALSKFPAMPNILMLRPADGNETAGSYKVAVENRKTPSILALSRKKLPNLPGTSIEGVEKGGYTITDNSSGNKPDVILIGTGSELEIAAKAGDELRKEGKAVRVVSFVSWELFEKQSDEYKESVLPSDVTARVSIEAGSTFGWHKIVGSKGKAIGIDKFGASAPAGKIYQEYGITVEAVVEAAKSVC</sequence>
<reference evidence="6 7" key="1">
    <citation type="journal article" date="1996" name="Plant Mol. Biol.">
        <title>Molecular characterization of transketolase (EC 2.2.1.1) active in the Calvin cycle of spinach chloroplasts.</title>
        <authorList>
            <person name="Flechner A."/>
            <person name="Dressen U."/>
            <person name="Westhoff P."/>
            <person name="Henze K."/>
            <person name="Schnarrenberger C."/>
            <person name="Martin W."/>
        </authorList>
    </citation>
    <scope>NUCLEOTIDE SEQUENCE [MRNA]</scope>
    <scope>FUNCTION</scope>
    <scope>CATALYTIC ACTIVITY</scope>
    <source>
        <tissue evidence="7">Seedling</tissue>
    </source>
</reference>
<reference evidence="6" key="2">
    <citation type="journal article" date="1998" name="Eur. J. Biochem.">
        <title>Purification, properties and in situ localization of the amphibolic enzymes D-ribulose 5-phosphate 3-epimerase and transketolase from spinach chloroplasts.</title>
        <authorList>
            <person name="Teige M."/>
            <person name="Melzer M."/>
            <person name="Suess K.-H."/>
        </authorList>
    </citation>
    <scope>PROTEIN SEQUENCE OF 67-83</scope>
    <scope>BIOPHYSICOCHEMICAL PROPERTIES</scope>
    <scope>SUBUNIT</scope>
    <scope>SUBCELLULAR LOCATION</scope>
    <source>
        <strain evidence="4">cv. Matador</strain>
        <tissue evidence="4">Leaf</tissue>
    </source>
</reference>
<name>TKTC_SPIOL</name>
<protein>
    <recommendedName>
        <fullName>Transketolase, chloroplastic</fullName>
        <shortName>TK</shortName>
        <ecNumber>2.2.1.1</ecNumber>
    </recommendedName>
</protein>
<dbReference type="EC" id="2.2.1.1"/>
<dbReference type="EMBL" id="L76554">
    <property type="protein sequence ID" value="AAD10219.1"/>
    <property type="molecule type" value="mRNA"/>
</dbReference>
<dbReference type="PIR" id="T09015">
    <property type="entry name" value="T09015"/>
</dbReference>
<dbReference type="SMR" id="O20250"/>
<dbReference type="SABIO-RK" id="O20250"/>
<dbReference type="UniPathway" id="UPA00116"/>
<dbReference type="Proteomes" id="UP001155700">
    <property type="component" value="Unplaced"/>
</dbReference>
<dbReference type="GO" id="GO:0009535">
    <property type="term" value="C:chloroplast thylakoid membrane"/>
    <property type="evidence" value="ECO:0000314"/>
    <property type="project" value="UniProtKB"/>
</dbReference>
<dbReference type="GO" id="GO:0005829">
    <property type="term" value="C:cytosol"/>
    <property type="evidence" value="ECO:0000318"/>
    <property type="project" value="GO_Central"/>
</dbReference>
<dbReference type="GO" id="GO:0046872">
    <property type="term" value="F:metal ion binding"/>
    <property type="evidence" value="ECO:0007669"/>
    <property type="project" value="UniProtKB-KW"/>
</dbReference>
<dbReference type="GO" id="GO:0004802">
    <property type="term" value="F:transketolase activity"/>
    <property type="evidence" value="ECO:0000314"/>
    <property type="project" value="UniProtKB"/>
</dbReference>
<dbReference type="GO" id="GO:0006098">
    <property type="term" value="P:pentose-phosphate shunt"/>
    <property type="evidence" value="ECO:0000318"/>
    <property type="project" value="GO_Central"/>
</dbReference>
<dbReference type="GO" id="GO:0009051">
    <property type="term" value="P:pentose-phosphate shunt, oxidative branch"/>
    <property type="evidence" value="ECO:0000303"/>
    <property type="project" value="UniProtKB"/>
</dbReference>
<dbReference type="GO" id="GO:0019253">
    <property type="term" value="P:reductive pentose-phosphate cycle"/>
    <property type="evidence" value="ECO:0000303"/>
    <property type="project" value="UniProtKB"/>
</dbReference>
<dbReference type="CDD" id="cd07033">
    <property type="entry name" value="TPP_PYR_DXS_TK_like"/>
    <property type="match status" value="1"/>
</dbReference>
<dbReference type="CDD" id="cd02012">
    <property type="entry name" value="TPP_TK"/>
    <property type="match status" value="1"/>
</dbReference>
<dbReference type="FunFam" id="3.40.50.920:FF:000003">
    <property type="entry name" value="Transketolase"/>
    <property type="match status" value="1"/>
</dbReference>
<dbReference type="FunFam" id="3.40.50.970:FF:000003">
    <property type="entry name" value="Transketolase"/>
    <property type="match status" value="1"/>
</dbReference>
<dbReference type="FunFam" id="3.40.50.970:FF:000004">
    <property type="entry name" value="Transketolase"/>
    <property type="match status" value="1"/>
</dbReference>
<dbReference type="Gene3D" id="3.40.50.920">
    <property type="match status" value="1"/>
</dbReference>
<dbReference type="Gene3D" id="3.40.50.970">
    <property type="match status" value="2"/>
</dbReference>
<dbReference type="InterPro" id="IPR029061">
    <property type="entry name" value="THDP-binding"/>
</dbReference>
<dbReference type="InterPro" id="IPR009014">
    <property type="entry name" value="Transketo_C/PFOR_II"/>
</dbReference>
<dbReference type="InterPro" id="IPR055152">
    <property type="entry name" value="Transketolase-like_C_2"/>
</dbReference>
<dbReference type="InterPro" id="IPR005475">
    <property type="entry name" value="Transketolase-like_Pyr-bd"/>
</dbReference>
<dbReference type="InterPro" id="IPR005478">
    <property type="entry name" value="Transketolase_bac-like"/>
</dbReference>
<dbReference type="InterPro" id="IPR049557">
    <property type="entry name" value="Transketolase_CS"/>
</dbReference>
<dbReference type="InterPro" id="IPR033247">
    <property type="entry name" value="Transketolase_fam"/>
</dbReference>
<dbReference type="InterPro" id="IPR005474">
    <property type="entry name" value="Transketolase_N"/>
</dbReference>
<dbReference type="NCBIfam" id="TIGR00232">
    <property type="entry name" value="tktlase_bact"/>
    <property type="match status" value="1"/>
</dbReference>
<dbReference type="PANTHER" id="PTHR43522">
    <property type="entry name" value="TRANSKETOLASE"/>
    <property type="match status" value="1"/>
</dbReference>
<dbReference type="PANTHER" id="PTHR43522:SF17">
    <property type="entry name" value="TRANSKETOLASE, CHLOROPLASTIC"/>
    <property type="match status" value="1"/>
</dbReference>
<dbReference type="Pfam" id="PF02779">
    <property type="entry name" value="Transket_pyr"/>
    <property type="match status" value="1"/>
</dbReference>
<dbReference type="Pfam" id="PF22613">
    <property type="entry name" value="Transketolase_C_1"/>
    <property type="match status" value="1"/>
</dbReference>
<dbReference type="Pfam" id="PF00456">
    <property type="entry name" value="Transketolase_N"/>
    <property type="match status" value="1"/>
</dbReference>
<dbReference type="SMART" id="SM00861">
    <property type="entry name" value="Transket_pyr"/>
    <property type="match status" value="1"/>
</dbReference>
<dbReference type="SUPFAM" id="SSF52518">
    <property type="entry name" value="Thiamin diphosphate-binding fold (THDP-binding)"/>
    <property type="match status" value="2"/>
</dbReference>
<dbReference type="SUPFAM" id="SSF52922">
    <property type="entry name" value="TK C-terminal domain-like"/>
    <property type="match status" value="1"/>
</dbReference>
<dbReference type="PROSITE" id="PS00801">
    <property type="entry name" value="TRANSKETOLASE_1"/>
    <property type="match status" value="1"/>
</dbReference>
<comment type="function">
    <text evidence="3 5">Catalyzes the reversible transfer of a two-carbon ketol group from fructose-6-phosphate or sedoheptulose-7-phosphate to glyceraldehyde-3-phosphate to yield xylulose-5-phosphate and erythrose-4-phosphate or ribose-5-phosphate, respectively.</text>
</comment>
<comment type="catalytic activity">
    <reaction evidence="3">
        <text>D-sedoheptulose 7-phosphate + D-glyceraldehyde 3-phosphate = aldehydo-D-ribose 5-phosphate + D-xylulose 5-phosphate</text>
        <dbReference type="Rhea" id="RHEA:10508"/>
        <dbReference type="ChEBI" id="CHEBI:57483"/>
        <dbReference type="ChEBI" id="CHEBI:57737"/>
        <dbReference type="ChEBI" id="CHEBI:58273"/>
        <dbReference type="ChEBI" id="CHEBI:59776"/>
        <dbReference type="EC" id="2.2.1.1"/>
    </reaction>
</comment>
<comment type="cofactor">
    <cofactor evidence="1">
        <name>Mg(2+)</name>
        <dbReference type="ChEBI" id="CHEBI:18420"/>
    </cofactor>
    <cofactor evidence="1">
        <name>Ca(2+)</name>
        <dbReference type="ChEBI" id="CHEBI:29108"/>
    </cofactor>
    <cofactor evidence="1">
        <name>Mn(2+)</name>
        <dbReference type="ChEBI" id="CHEBI:29035"/>
    </cofactor>
    <cofactor evidence="1">
        <name>Co(2+)</name>
        <dbReference type="ChEBI" id="CHEBI:48828"/>
    </cofactor>
    <text evidence="1">Binds 1 Mg(2+) ion per subunit. Can also utilize other divalent metal cations, such as Ca(2+), Mn(2+) and Co(2+).</text>
</comment>
<comment type="cofactor">
    <cofactor evidence="1">
        <name>thiamine diphosphate</name>
        <dbReference type="ChEBI" id="CHEBI:58937"/>
    </cofactor>
    <text evidence="1">Binds 1 thiamine pyrophosphate per subunit.</text>
</comment>
<comment type="biophysicochemical properties">
    <kinetics>
        <KM evidence="4">67 uM for xylulose 5-phosphate</KM>
        <KM evidence="4">330 uM for ribose 5-phosphate</KM>
    </kinetics>
    <phDependence>
        <text evidence="4">Optimum pH is 8.0.</text>
    </phDependence>
</comment>
<comment type="pathway">
    <text>Carbohydrate biosynthesis; Calvin cycle.</text>
</comment>
<comment type="subunit">
    <text evidence="4">Homodimer.</text>
</comment>
<comment type="subcellular location">
    <subcellularLocation>
        <location evidence="4">Plastid</location>
        <location evidence="4">Chloroplast thylakoid membrane</location>
    </subcellularLocation>
</comment>
<comment type="similarity">
    <text evidence="3">Belongs to the transketolase family.</text>
</comment>
<evidence type="ECO:0000250" key="1"/>
<evidence type="ECO:0000256" key="2">
    <source>
        <dbReference type="SAM" id="MobiDB-lite"/>
    </source>
</evidence>
<evidence type="ECO:0000269" key="3">
    <source>
    </source>
</evidence>
<evidence type="ECO:0000269" key="4">
    <source>
    </source>
</evidence>
<evidence type="ECO:0000303" key="5">
    <source>
    </source>
</evidence>
<evidence type="ECO:0000305" key="6"/>
<evidence type="ECO:0000312" key="7">
    <source>
        <dbReference type="EMBL" id="AAD10219.1"/>
    </source>
</evidence>
<organism>
    <name type="scientific">Spinacia oleracea</name>
    <name type="common">Spinach</name>
    <dbReference type="NCBI Taxonomy" id="3562"/>
    <lineage>
        <taxon>Eukaryota</taxon>
        <taxon>Viridiplantae</taxon>
        <taxon>Streptophyta</taxon>
        <taxon>Embryophyta</taxon>
        <taxon>Tracheophyta</taxon>
        <taxon>Spermatophyta</taxon>
        <taxon>Magnoliopsida</taxon>
        <taxon>eudicotyledons</taxon>
        <taxon>Gunneridae</taxon>
        <taxon>Pentapetalae</taxon>
        <taxon>Caryophyllales</taxon>
        <taxon>Chenopodiaceae</taxon>
        <taxon>Chenopodioideae</taxon>
        <taxon>Anserineae</taxon>
        <taxon>Spinacia</taxon>
    </lineage>
</organism>
<keyword id="KW-0106">Calcium</keyword>
<keyword id="KW-0150">Chloroplast</keyword>
<keyword id="KW-0903">Direct protein sequencing</keyword>
<keyword id="KW-0460">Magnesium</keyword>
<keyword id="KW-0472">Membrane</keyword>
<keyword id="KW-0479">Metal-binding</keyword>
<keyword id="KW-0934">Plastid</keyword>
<keyword id="KW-1185">Reference proteome</keyword>
<keyword id="KW-0786">Thiamine pyrophosphate</keyword>
<keyword id="KW-0793">Thylakoid</keyword>
<keyword id="KW-0808">Transferase</keyword>
<keyword id="KW-0809">Transit peptide</keyword>
<accession>O20250</accession>
<feature type="transit peptide" description="Chloroplast" evidence="4">
    <location>
        <begin position="1"/>
        <end position="66"/>
    </location>
</feature>
<feature type="chain" id="PRO_0000035752" description="Transketolase, chloroplastic">
    <location>
        <begin position="67"/>
        <end position="741"/>
    </location>
</feature>
<feature type="region of interest" description="Disordered" evidence="2">
    <location>
        <begin position="1"/>
        <end position="33"/>
    </location>
</feature>
<feature type="compositionally biased region" description="Low complexity" evidence="2">
    <location>
        <begin position="1"/>
        <end position="19"/>
    </location>
</feature>
<feature type="compositionally biased region" description="Polar residues" evidence="2">
    <location>
        <begin position="24"/>
        <end position="33"/>
    </location>
</feature>
<feature type="active site" description="Proton donor" evidence="1">
    <location>
        <position position="488"/>
    </location>
</feature>
<feature type="binding site" evidence="1">
    <location>
        <position position="103"/>
    </location>
    <ligand>
        <name>substrate</name>
    </ligand>
</feature>
<feature type="binding site" evidence="1">
    <location>
        <position position="143"/>
    </location>
    <ligand>
        <name>thiamine diphosphate</name>
        <dbReference type="ChEBI" id="CHEBI:58937"/>
    </ligand>
</feature>
<feature type="binding site" evidence="1">
    <location>
        <begin position="192"/>
        <end position="194"/>
    </location>
    <ligand>
        <name>thiamine diphosphate</name>
        <dbReference type="ChEBI" id="CHEBI:58937"/>
    </ligand>
</feature>
<feature type="binding site" evidence="1">
    <location>
        <position position="233"/>
    </location>
    <ligand>
        <name>Mg(2+)</name>
        <dbReference type="ChEBI" id="CHEBI:18420"/>
    </ligand>
</feature>
<feature type="binding site" evidence="1">
    <location>
        <position position="234"/>
    </location>
    <ligand>
        <name>thiamine diphosphate</name>
        <dbReference type="ChEBI" id="CHEBI:58937"/>
    </ligand>
</feature>
<feature type="binding site" evidence="1">
    <location>
        <position position="263"/>
    </location>
    <ligand>
        <name>Mg(2+)</name>
        <dbReference type="ChEBI" id="CHEBI:18420"/>
    </ligand>
</feature>
<feature type="binding site" evidence="1">
    <location>
        <position position="263"/>
    </location>
    <ligand>
        <name>thiamine diphosphate</name>
        <dbReference type="ChEBI" id="CHEBI:58937"/>
    </ligand>
</feature>
<feature type="binding site" evidence="1">
    <location>
        <position position="265"/>
    </location>
    <ligand>
        <name>Mg(2+)</name>
        <dbReference type="ChEBI" id="CHEBI:18420"/>
    </ligand>
</feature>
<feature type="binding site" evidence="1">
    <location>
        <position position="340"/>
    </location>
    <ligand>
        <name>substrate</name>
    </ligand>
</feature>
<feature type="binding site" evidence="1">
    <location>
        <position position="340"/>
    </location>
    <ligand>
        <name>thiamine diphosphate</name>
        <dbReference type="ChEBI" id="CHEBI:58937"/>
    </ligand>
</feature>
<feature type="binding site" evidence="1">
    <location>
        <position position="434"/>
    </location>
    <ligand>
        <name>substrate</name>
    </ligand>
</feature>
<feature type="binding site" evidence="1">
    <location>
        <position position="461"/>
    </location>
    <ligand>
        <name>substrate</name>
    </ligand>
</feature>
<feature type="binding site" evidence="1">
    <location>
        <position position="488"/>
    </location>
    <ligand>
        <name>thiamine diphosphate</name>
        <dbReference type="ChEBI" id="CHEBI:58937"/>
    </ligand>
</feature>
<feature type="binding site" evidence="1">
    <location>
        <position position="515"/>
    </location>
    <ligand>
        <name>thiamine diphosphate</name>
        <dbReference type="ChEBI" id="CHEBI:58937"/>
    </ligand>
</feature>
<feature type="binding site" evidence="1">
    <location>
        <position position="539"/>
    </location>
    <ligand>
        <name>substrate</name>
    </ligand>
</feature>
<feature type="binding site" evidence="1">
    <location>
        <position position="547"/>
    </location>
    <ligand>
        <name>substrate</name>
    </ligand>
</feature>
<feature type="binding site" evidence="1">
    <location>
        <position position="598"/>
    </location>
    <ligand>
        <name>substrate</name>
    </ligand>
</feature>
<feature type="site" description="Important for catalytic activity" evidence="1">
    <location>
        <position position="103"/>
    </location>
</feature>
<feature type="site" description="Important for catalytic activity" evidence="1">
    <location>
        <position position="340"/>
    </location>
</feature>
<feature type="sequence conflict" description="In Ref. 2; AA sequence." evidence="6" ref="2">
    <original>I</original>
    <variation>D</variation>
    <location>
        <position position="77"/>
    </location>
</feature>
<feature type="sequence conflict" description="In Ref. 2; AA sequence." evidence="6" ref="2">
    <original>K</original>
    <variation>G</variation>
    <location>
        <position position="83"/>
    </location>
</feature>
<proteinExistence type="evidence at protein level"/>